<organism>
    <name type="scientific">Schizosaccharomyces pombe (strain 972 / ATCC 24843)</name>
    <name type="common">Fission yeast</name>
    <dbReference type="NCBI Taxonomy" id="284812"/>
    <lineage>
        <taxon>Eukaryota</taxon>
        <taxon>Fungi</taxon>
        <taxon>Dikarya</taxon>
        <taxon>Ascomycota</taxon>
        <taxon>Taphrinomycotina</taxon>
        <taxon>Schizosaccharomycetes</taxon>
        <taxon>Schizosaccharomycetales</taxon>
        <taxon>Schizosaccharomycetaceae</taxon>
        <taxon>Schizosaccharomyces</taxon>
    </lineage>
</organism>
<sequence length="533" mass="58597">MKRFFSKLFSKSPTSGRVPSPDSDYSEEEQRLLAEENGYFQDSNEYVEPNIPAVYGSMIPVAQQLQQHHVHTPGESFADNASGYPVIKHELSELLRLGSPTVIAYLLQSSEQFSTVFTLGHLGKEYLAASSLSTMTAAISAFSIFQGVISSLDTLATQAFGANKPYNVAIYLQRCLLILAVLHIPVALIWLNLEHILIFLHQDPMVAHLCGRYMRVFILAAPGYAVFEALKRYLQAQGIFTPITYVLCFAAPLNILLNYLLVWHPTIGFGFLGAPVAVATTFWFQSICLILYICFSSTPIPWPGFSRQALKNLSPMLHFSFHGMLMIVTEWAAYEMTSLGAGYLGTAPLASQSILLTSTSLLFQIPFAFAVASSTRVGHLIGSGRANLARLCSRVAYSLALCISIFDGSLIFCFRDVWGSLFTSDPEVLAVVKDIFPILSLFIVTDGLNAVGGGLLRGTGKQYIGGLISIGSSYLFALPVTVFVVVYFNTGLKGIWCGMILSSVTAITCQFTVLFNTDWHRVLQEARHRLTHV</sequence>
<keyword id="KW-0472">Membrane</keyword>
<keyword id="KW-0597">Phosphoprotein</keyword>
<keyword id="KW-1185">Reference proteome</keyword>
<keyword id="KW-0812">Transmembrane</keyword>
<keyword id="KW-1133">Transmembrane helix</keyword>
<keyword id="KW-0926">Vacuole</keyword>
<proteinExistence type="evidence at protein level"/>
<protein>
    <recommendedName>
        <fullName>Uncharacterized transporter C323.07c</fullName>
    </recommendedName>
</protein>
<feature type="chain" id="PRO_0000316590" description="Uncharacterized transporter C323.07c">
    <location>
        <begin position="1"/>
        <end position="533"/>
    </location>
</feature>
<feature type="transmembrane region" description="Helical" evidence="1">
    <location>
        <begin position="178"/>
        <end position="198"/>
    </location>
</feature>
<feature type="transmembrane region" description="Helical" evidence="1">
    <location>
        <begin position="213"/>
        <end position="230"/>
    </location>
</feature>
<feature type="transmembrane region" description="Helical" evidence="1">
    <location>
        <begin position="242"/>
        <end position="264"/>
    </location>
</feature>
<feature type="transmembrane region" description="Helical" evidence="1">
    <location>
        <begin position="274"/>
        <end position="296"/>
    </location>
</feature>
<feature type="transmembrane region" description="Helical" evidence="1">
    <location>
        <begin position="313"/>
        <end position="333"/>
    </location>
</feature>
<feature type="transmembrane region" description="Helical" evidence="1">
    <location>
        <begin position="353"/>
        <end position="373"/>
    </location>
</feature>
<feature type="transmembrane region" description="Helical" evidence="1">
    <location>
        <begin position="394"/>
        <end position="414"/>
    </location>
</feature>
<feature type="transmembrane region" description="Helical" evidence="1">
    <location>
        <begin position="435"/>
        <end position="455"/>
    </location>
</feature>
<feature type="transmembrane region" description="Helical" evidence="1">
    <location>
        <begin position="466"/>
        <end position="486"/>
    </location>
</feature>
<feature type="transmembrane region" description="Helical" evidence="1">
    <location>
        <begin position="495"/>
        <end position="515"/>
    </location>
</feature>
<feature type="region of interest" description="Disordered" evidence="2">
    <location>
        <begin position="1"/>
        <end position="26"/>
    </location>
</feature>
<feature type="modified residue" description="Phosphoserine" evidence="4">
    <location>
        <position position="20"/>
    </location>
</feature>
<feature type="modified residue" description="Phosphoserine" evidence="4">
    <location>
        <position position="23"/>
    </location>
</feature>
<feature type="modified residue" description="Phosphotyrosine" evidence="4">
    <location>
        <position position="25"/>
    </location>
</feature>
<feature type="modified residue" description="Phosphoserine" evidence="4">
    <location>
        <position position="26"/>
    </location>
</feature>
<evidence type="ECO:0000255" key="1"/>
<evidence type="ECO:0000256" key="2">
    <source>
        <dbReference type="SAM" id="MobiDB-lite"/>
    </source>
</evidence>
<evidence type="ECO:0000269" key="3">
    <source>
    </source>
</evidence>
<evidence type="ECO:0000269" key="4">
    <source>
    </source>
</evidence>
<evidence type="ECO:0000305" key="5"/>
<reference key="1">
    <citation type="journal article" date="2002" name="Nature">
        <title>The genome sequence of Schizosaccharomyces pombe.</title>
        <authorList>
            <person name="Wood V."/>
            <person name="Gwilliam R."/>
            <person name="Rajandream M.A."/>
            <person name="Lyne M.H."/>
            <person name="Lyne R."/>
            <person name="Stewart A."/>
            <person name="Sgouros J.G."/>
            <person name="Peat N."/>
            <person name="Hayles J."/>
            <person name="Baker S.G."/>
            <person name="Basham D."/>
            <person name="Bowman S."/>
            <person name="Brooks K."/>
            <person name="Brown D."/>
            <person name="Brown S."/>
            <person name="Chillingworth T."/>
            <person name="Churcher C.M."/>
            <person name="Collins M."/>
            <person name="Connor R."/>
            <person name="Cronin A."/>
            <person name="Davis P."/>
            <person name="Feltwell T."/>
            <person name="Fraser A."/>
            <person name="Gentles S."/>
            <person name="Goble A."/>
            <person name="Hamlin N."/>
            <person name="Harris D.E."/>
            <person name="Hidalgo J."/>
            <person name="Hodgson G."/>
            <person name="Holroyd S."/>
            <person name="Hornsby T."/>
            <person name="Howarth S."/>
            <person name="Huckle E.J."/>
            <person name="Hunt S."/>
            <person name="Jagels K."/>
            <person name="James K.D."/>
            <person name="Jones L."/>
            <person name="Jones M."/>
            <person name="Leather S."/>
            <person name="McDonald S."/>
            <person name="McLean J."/>
            <person name="Mooney P."/>
            <person name="Moule S."/>
            <person name="Mungall K.L."/>
            <person name="Murphy L.D."/>
            <person name="Niblett D."/>
            <person name="Odell C."/>
            <person name="Oliver K."/>
            <person name="O'Neil S."/>
            <person name="Pearson D."/>
            <person name="Quail M.A."/>
            <person name="Rabbinowitsch E."/>
            <person name="Rutherford K.M."/>
            <person name="Rutter S."/>
            <person name="Saunders D."/>
            <person name="Seeger K."/>
            <person name="Sharp S."/>
            <person name="Skelton J."/>
            <person name="Simmonds M.N."/>
            <person name="Squares R."/>
            <person name="Squares S."/>
            <person name="Stevens K."/>
            <person name="Taylor K."/>
            <person name="Taylor R.G."/>
            <person name="Tivey A."/>
            <person name="Walsh S.V."/>
            <person name="Warren T."/>
            <person name="Whitehead S."/>
            <person name="Woodward J.R."/>
            <person name="Volckaert G."/>
            <person name="Aert R."/>
            <person name="Robben J."/>
            <person name="Grymonprez B."/>
            <person name="Weltjens I."/>
            <person name="Vanstreels E."/>
            <person name="Rieger M."/>
            <person name="Schaefer M."/>
            <person name="Mueller-Auer S."/>
            <person name="Gabel C."/>
            <person name="Fuchs M."/>
            <person name="Duesterhoeft A."/>
            <person name="Fritzc C."/>
            <person name="Holzer E."/>
            <person name="Moestl D."/>
            <person name="Hilbert H."/>
            <person name="Borzym K."/>
            <person name="Langer I."/>
            <person name="Beck A."/>
            <person name="Lehrach H."/>
            <person name="Reinhardt R."/>
            <person name="Pohl T.M."/>
            <person name="Eger P."/>
            <person name="Zimmermann W."/>
            <person name="Wedler H."/>
            <person name="Wambutt R."/>
            <person name="Purnelle B."/>
            <person name="Goffeau A."/>
            <person name="Cadieu E."/>
            <person name="Dreano S."/>
            <person name="Gloux S."/>
            <person name="Lelaure V."/>
            <person name="Mottier S."/>
            <person name="Galibert F."/>
            <person name="Aves S.J."/>
            <person name="Xiang Z."/>
            <person name="Hunt C."/>
            <person name="Moore K."/>
            <person name="Hurst S.M."/>
            <person name="Lucas M."/>
            <person name="Rochet M."/>
            <person name="Gaillardin C."/>
            <person name="Tallada V.A."/>
            <person name="Garzon A."/>
            <person name="Thode G."/>
            <person name="Daga R.R."/>
            <person name="Cruzado L."/>
            <person name="Jimenez J."/>
            <person name="Sanchez M."/>
            <person name="del Rey F."/>
            <person name="Benito J."/>
            <person name="Dominguez A."/>
            <person name="Revuelta J.L."/>
            <person name="Moreno S."/>
            <person name="Armstrong J."/>
            <person name="Forsburg S.L."/>
            <person name="Cerutti L."/>
            <person name="Lowe T."/>
            <person name="McCombie W.R."/>
            <person name="Paulsen I."/>
            <person name="Potashkin J."/>
            <person name="Shpakovski G.V."/>
            <person name="Ussery D."/>
            <person name="Barrell B.G."/>
            <person name="Nurse P."/>
        </authorList>
    </citation>
    <scope>NUCLEOTIDE SEQUENCE [LARGE SCALE GENOMIC DNA]</scope>
    <source>
        <strain>972 / ATCC 24843</strain>
    </source>
</reference>
<reference key="2">
    <citation type="journal article" date="2006" name="Nat. Biotechnol.">
        <title>ORFeome cloning and global analysis of protein localization in the fission yeast Schizosaccharomyces pombe.</title>
        <authorList>
            <person name="Matsuyama A."/>
            <person name="Arai R."/>
            <person name="Yashiroda Y."/>
            <person name="Shirai A."/>
            <person name="Kamata A."/>
            <person name="Sekido S."/>
            <person name="Kobayashi Y."/>
            <person name="Hashimoto A."/>
            <person name="Hamamoto M."/>
            <person name="Hiraoka Y."/>
            <person name="Horinouchi S."/>
            <person name="Yoshida M."/>
        </authorList>
    </citation>
    <scope>SUBCELLULAR LOCATION [LARGE SCALE ANALYSIS]</scope>
</reference>
<reference key="3">
    <citation type="journal article" date="2008" name="J. Proteome Res.">
        <title>Phosphoproteome analysis of fission yeast.</title>
        <authorList>
            <person name="Wilson-Grady J.T."/>
            <person name="Villen J."/>
            <person name="Gygi S.P."/>
        </authorList>
    </citation>
    <scope>PHOSPHORYLATION [LARGE SCALE ANALYSIS] AT SER-20; SER-23; TYR-25 AND SER-26</scope>
    <scope>IDENTIFICATION BY MASS SPECTROMETRY</scope>
</reference>
<accession>Q9UT92</accession>
<comment type="subcellular location">
    <subcellularLocation>
        <location evidence="3">Vacuole membrane</location>
        <topology evidence="3">Multi-pass membrane protein</topology>
    </subcellularLocation>
</comment>
<comment type="similarity">
    <text evidence="5">Belongs to the multi antimicrobial extrusion (MATE) (TC 2.A.66.1) family.</text>
</comment>
<dbReference type="EMBL" id="CU329670">
    <property type="protein sequence ID" value="CAB53410.1"/>
    <property type="molecule type" value="Genomic_DNA"/>
</dbReference>
<dbReference type="PIR" id="T38644">
    <property type="entry name" value="T38644"/>
</dbReference>
<dbReference type="RefSeq" id="NP_594377.1">
    <property type="nucleotide sequence ID" value="NM_001019798.2"/>
</dbReference>
<dbReference type="SMR" id="Q9UT92"/>
<dbReference type="BioGRID" id="278128">
    <property type="interactions" value="2"/>
</dbReference>
<dbReference type="FunCoup" id="Q9UT92">
    <property type="interactions" value="101"/>
</dbReference>
<dbReference type="STRING" id="284812.Q9UT92"/>
<dbReference type="iPTMnet" id="Q9UT92"/>
<dbReference type="PaxDb" id="4896-SPAC323.07c.1"/>
<dbReference type="EnsemblFungi" id="SPAC323.07c.1">
    <property type="protein sequence ID" value="SPAC323.07c.1:pep"/>
    <property type="gene ID" value="SPAC323.07c"/>
</dbReference>
<dbReference type="KEGG" id="spo:2541632"/>
<dbReference type="PomBase" id="SPAC323.07c"/>
<dbReference type="VEuPathDB" id="FungiDB:SPAC323.07c"/>
<dbReference type="eggNOG" id="KOG1347">
    <property type="taxonomic scope" value="Eukaryota"/>
</dbReference>
<dbReference type="HOGENOM" id="CLU_012893_1_2_1"/>
<dbReference type="InParanoid" id="Q9UT92"/>
<dbReference type="OMA" id="WFFVWKL"/>
<dbReference type="PhylomeDB" id="Q9UT92"/>
<dbReference type="Reactome" id="R-SPO-425366">
    <property type="pathway name" value="Transport of bile salts and organic acids, metal ions and amine compounds"/>
</dbReference>
<dbReference type="PRO" id="PR:Q9UT92"/>
<dbReference type="Proteomes" id="UP000002485">
    <property type="component" value="Chromosome I"/>
</dbReference>
<dbReference type="GO" id="GO:0000324">
    <property type="term" value="C:fungal-type vacuole"/>
    <property type="evidence" value="ECO:0007005"/>
    <property type="project" value="PomBase"/>
</dbReference>
<dbReference type="GO" id="GO:0016020">
    <property type="term" value="C:membrane"/>
    <property type="evidence" value="ECO:0000318"/>
    <property type="project" value="GO_Central"/>
</dbReference>
<dbReference type="GO" id="GO:0005774">
    <property type="term" value="C:vacuolar membrane"/>
    <property type="evidence" value="ECO:0007669"/>
    <property type="project" value="UniProtKB-SubCell"/>
</dbReference>
<dbReference type="GO" id="GO:0015297">
    <property type="term" value="F:antiporter activity"/>
    <property type="evidence" value="ECO:0007669"/>
    <property type="project" value="InterPro"/>
</dbReference>
<dbReference type="GO" id="GO:0022857">
    <property type="term" value="F:transmembrane transporter activity"/>
    <property type="evidence" value="ECO:0000318"/>
    <property type="project" value="GO_Central"/>
</dbReference>
<dbReference type="GO" id="GO:0042910">
    <property type="term" value="F:xenobiotic transmembrane transporter activity"/>
    <property type="evidence" value="ECO:0007669"/>
    <property type="project" value="InterPro"/>
</dbReference>
<dbReference type="GO" id="GO:1990961">
    <property type="term" value="P:xenobiotic detoxification by transmembrane export across the plasma membrane"/>
    <property type="evidence" value="ECO:0007669"/>
    <property type="project" value="InterPro"/>
</dbReference>
<dbReference type="CDD" id="cd13132">
    <property type="entry name" value="MATE_eukaryotic"/>
    <property type="match status" value="1"/>
</dbReference>
<dbReference type="InterPro" id="IPR045069">
    <property type="entry name" value="MATE_euk"/>
</dbReference>
<dbReference type="InterPro" id="IPR002528">
    <property type="entry name" value="MATE_fam"/>
</dbReference>
<dbReference type="NCBIfam" id="TIGR00797">
    <property type="entry name" value="matE"/>
    <property type="match status" value="1"/>
</dbReference>
<dbReference type="PANTHER" id="PTHR11206">
    <property type="entry name" value="MULTIDRUG RESISTANCE PROTEIN"/>
    <property type="match status" value="1"/>
</dbReference>
<dbReference type="Pfam" id="PF01554">
    <property type="entry name" value="MatE"/>
    <property type="match status" value="2"/>
</dbReference>
<name>YL47_SCHPO</name>
<gene>
    <name type="ORF">SPAC323.07c</name>
</gene>